<organism>
    <name type="scientific">Listeria innocua serovar 6a (strain ATCC BAA-680 / CLIP 11262)</name>
    <dbReference type="NCBI Taxonomy" id="272626"/>
    <lineage>
        <taxon>Bacteria</taxon>
        <taxon>Bacillati</taxon>
        <taxon>Bacillota</taxon>
        <taxon>Bacilli</taxon>
        <taxon>Bacillales</taxon>
        <taxon>Listeriaceae</taxon>
        <taxon>Listeria</taxon>
    </lineage>
</organism>
<keyword id="KW-0004">4Fe-4S</keyword>
<keyword id="KW-0963">Cytoplasm</keyword>
<keyword id="KW-0408">Iron</keyword>
<keyword id="KW-0411">Iron-sulfur</keyword>
<keyword id="KW-0479">Metal-binding</keyword>
<keyword id="KW-0560">Oxidoreductase</keyword>
<keyword id="KW-0949">S-adenosyl-L-methionine</keyword>
<name>PFLA_LISIN</name>
<dbReference type="EC" id="1.97.1.4"/>
<dbReference type="EMBL" id="AL596168">
    <property type="protein sequence ID" value="CAC96675.1"/>
    <property type="molecule type" value="Genomic_DNA"/>
</dbReference>
<dbReference type="PIR" id="AC1613">
    <property type="entry name" value="AC1613"/>
</dbReference>
<dbReference type="RefSeq" id="WP_003721912.1">
    <property type="nucleotide sequence ID" value="NC_003212.1"/>
</dbReference>
<dbReference type="SMR" id="P0A443"/>
<dbReference type="STRING" id="272626.gene:17565775"/>
<dbReference type="GeneID" id="93234825"/>
<dbReference type="KEGG" id="lin:pflC"/>
<dbReference type="eggNOG" id="COG1180">
    <property type="taxonomic scope" value="Bacteria"/>
</dbReference>
<dbReference type="HOGENOM" id="CLU_058969_1_1_9"/>
<dbReference type="OrthoDB" id="9782387at2"/>
<dbReference type="Proteomes" id="UP000002513">
    <property type="component" value="Chromosome"/>
</dbReference>
<dbReference type="GO" id="GO:0005737">
    <property type="term" value="C:cytoplasm"/>
    <property type="evidence" value="ECO:0007669"/>
    <property type="project" value="UniProtKB-SubCell"/>
</dbReference>
<dbReference type="GO" id="GO:0051539">
    <property type="term" value="F:4 iron, 4 sulfur cluster binding"/>
    <property type="evidence" value="ECO:0007669"/>
    <property type="project" value="UniProtKB-KW"/>
</dbReference>
<dbReference type="GO" id="GO:0043365">
    <property type="term" value="F:[formate-C-acetyltransferase]-activating enzyme activity"/>
    <property type="evidence" value="ECO:0007669"/>
    <property type="project" value="UniProtKB-EC"/>
</dbReference>
<dbReference type="GO" id="GO:0046872">
    <property type="term" value="F:metal ion binding"/>
    <property type="evidence" value="ECO:0007669"/>
    <property type="project" value="UniProtKB-KW"/>
</dbReference>
<dbReference type="CDD" id="cd01335">
    <property type="entry name" value="Radical_SAM"/>
    <property type="match status" value="1"/>
</dbReference>
<dbReference type="Gene3D" id="3.20.20.70">
    <property type="entry name" value="Aldolase class I"/>
    <property type="match status" value="1"/>
</dbReference>
<dbReference type="InterPro" id="IPR013785">
    <property type="entry name" value="Aldolase_TIM"/>
</dbReference>
<dbReference type="InterPro" id="IPR034457">
    <property type="entry name" value="Organic_radical-activating"/>
</dbReference>
<dbReference type="InterPro" id="IPR012839">
    <property type="entry name" value="Organic_radical_activase"/>
</dbReference>
<dbReference type="InterPro" id="IPR012838">
    <property type="entry name" value="PFL1_activating"/>
</dbReference>
<dbReference type="InterPro" id="IPR034465">
    <property type="entry name" value="Pyruvate_for-lyase_activase"/>
</dbReference>
<dbReference type="InterPro" id="IPR001989">
    <property type="entry name" value="Radical_activat_CS"/>
</dbReference>
<dbReference type="InterPro" id="IPR007197">
    <property type="entry name" value="rSAM"/>
</dbReference>
<dbReference type="NCBIfam" id="TIGR02493">
    <property type="entry name" value="PFLA"/>
    <property type="match status" value="1"/>
</dbReference>
<dbReference type="PANTHER" id="PTHR30352:SF5">
    <property type="entry name" value="PYRUVATE FORMATE-LYASE 1-ACTIVATING ENZYME"/>
    <property type="match status" value="1"/>
</dbReference>
<dbReference type="PANTHER" id="PTHR30352">
    <property type="entry name" value="PYRUVATE FORMATE-LYASE-ACTIVATING ENZYME"/>
    <property type="match status" value="1"/>
</dbReference>
<dbReference type="Pfam" id="PF13353">
    <property type="entry name" value="Fer4_12"/>
    <property type="match status" value="1"/>
</dbReference>
<dbReference type="Pfam" id="PF04055">
    <property type="entry name" value="Radical_SAM"/>
    <property type="match status" value="1"/>
</dbReference>
<dbReference type="PIRSF" id="PIRSF000371">
    <property type="entry name" value="PFL_act_enz"/>
    <property type="match status" value="1"/>
</dbReference>
<dbReference type="SFLD" id="SFLDG01066">
    <property type="entry name" value="organic_radical-activating_enz"/>
    <property type="match status" value="1"/>
</dbReference>
<dbReference type="SFLD" id="SFLDF00278">
    <property type="entry name" value="pyruvate_formate-lyase_activas"/>
    <property type="match status" value="1"/>
</dbReference>
<dbReference type="SUPFAM" id="SSF102114">
    <property type="entry name" value="Radical SAM enzymes"/>
    <property type="match status" value="1"/>
</dbReference>
<dbReference type="PROSITE" id="PS01087">
    <property type="entry name" value="RADICAL_ACTIVATING"/>
    <property type="match status" value="1"/>
</dbReference>
<dbReference type="PROSITE" id="PS51918">
    <property type="entry name" value="RADICAL_SAM"/>
    <property type="match status" value="1"/>
</dbReference>
<protein>
    <recommendedName>
        <fullName>Pyruvate formate-lyase-activating enzyme</fullName>
        <shortName>PFL-activating enzyme</shortName>
        <ecNumber>1.97.1.4</ecNumber>
    </recommendedName>
</protein>
<comment type="function">
    <text evidence="1">Activation of pyruvate formate-lyase under anaerobic conditions by generation of an organic free radical, using S-adenosylmethionine and reduced flavodoxin as cosubstrates to produce 5'-deoxy-adenosine.</text>
</comment>
<comment type="catalytic activity">
    <reaction>
        <text>glycyl-[formate C-acetyltransferase] + reduced [flavodoxin] + S-adenosyl-L-methionine = glycin-2-yl radical-[formate C-acetyltransferase] + semiquinone [flavodoxin] + 5'-deoxyadenosine + L-methionine + H(+)</text>
        <dbReference type="Rhea" id="RHEA:19225"/>
        <dbReference type="Rhea" id="RHEA-COMP:10622"/>
        <dbReference type="Rhea" id="RHEA-COMP:12190"/>
        <dbReference type="Rhea" id="RHEA-COMP:12191"/>
        <dbReference type="Rhea" id="RHEA-COMP:14480"/>
        <dbReference type="ChEBI" id="CHEBI:15378"/>
        <dbReference type="ChEBI" id="CHEBI:17319"/>
        <dbReference type="ChEBI" id="CHEBI:29947"/>
        <dbReference type="ChEBI" id="CHEBI:32722"/>
        <dbReference type="ChEBI" id="CHEBI:57618"/>
        <dbReference type="ChEBI" id="CHEBI:57844"/>
        <dbReference type="ChEBI" id="CHEBI:59789"/>
        <dbReference type="ChEBI" id="CHEBI:140311"/>
        <dbReference type="EC" id="1.97.1.4"/>
    </reaction>
</comment>
<comment type="cofactor">
    <cofactor evidence="1">
        <name>[4Fe-4S] cluster</name>
        <dbReference type="ChEBI" id="CHEBI:49883"/>
    </cofactor>
    <text evidence="1">Binds 1 [4Fe-4S] cluster. The cluster is coordinated with 3 cysteines and an exchangeable S-adenosyl-L-methionine.</text>
</comment>
<comment type="subcellular location">
    <subcellularLocation>
        <location evidence="1">Cytoplasm</location>
    </subcellularLocation>
</comment>
<comment type="similarity">
    <text evidence="4">Belongs to the organic radical-activating enzymes family.</text>
</comment>
<reference key="1">
    <citation type="journal article" date="2001" name="Science">
        <title>Comparative genomics of Listeria species.</title>
        <authorList>
            <person name="Glaser P."/>
            <person name="Frangeul L."/>
            <person name="Buchrieser C."/>
            <person name="Rusniok C."/>
            <person name="Amend A."/>
            <person name="Baquero F."/>
            <person name="Berche P."/>
            <person name="Bloecker H."/>
            <person name="Brandt P."/>
            <person name="Chakraborty T."/>
            <person name="Charbit A."/>
            <person name="Chetouani F."/>
            <person name="Couve E."/>
            <person name="de Daruvar A."/>
            <person name="Dehoux P."/>
            <person name="Domann E."/>
            <person name="Dominguez-Bernal G."/>
            <person name="Duchaud E."/>
            <person name="Durant L."/>
            <person name="Dussurget O."/>
            <person name="Entian K.-D."/>
            <person name="Fsihi H."/>
            <person name="Garcia-del Portillo F."/>
            <person name="Garrido P."/>
            <person name="Gautier L."/>
            <person name="Goebel W."/>
            <person name="Gomez-Lopez N."/>
            <person name="Hain T."/>
            <person name="Hauf J."/>
            <person name="Jackson D."/>
            <person name="Jones L.-M."/>
            <person name="Kaerst U."/>
            <person name="Kreft J."/>
            <person name="Kuhn M."/>
            <person name="Kunst F."/>
            <person name="Kurapkat G."/>
            <person name="Madueno E."/>
            <person name="Maitournam A."/>
            <person name="Mata Vicente J."/>
            <person name="Ng E."/>
            <person name="Nedjari H."/>
            <person name="Nordsiek G."/>
            <person name="Novella S."/>
            <person name="de Pablos B."/>
            <person name="Perez-Diaz J.-C."/>
            <person name="Purcell R."/>
            <person name="Remmel B."/>
            <person name="Rose M."/>
            <person name="Schlueter T."/>
            <person name="Simoes N."/>
            <person name="Tierrez A."/>
            <person name="Vazquez-Boland J.-A."/>
            <person name="Voss H."/>
            <person name="Wehland J."/>
            <person name="Cossart P."/>
        </authorList>
    </citation>
    <scope>NUCLEOTIDE SEQUENCE [LARGE SCALE GENOMIC DNA]</scope>
    <source>
        <strain>ATCC BAA-680 / CLIP 11262</strain>
    </source>
</reference>
<sequence length="248" mass="28115">MTEVLGRVHSVETMGTVDGPGIRFIVFMQGCLLRCQFCHNPDTWKIGTGTERSAQDVFDEAIKYKEFWDASGGGVTVSGGEPLLQVDFLIEFFTLCKAAGVHTTIDSCGGCFTRDPEFIEKLDRLMEVTDLILLDIKQINPEKHLKLTTKSNAPIIDFAHYLRDKEQPIWIRHVLIPTKTDDPEDLTKLHEFIQTLPNVKQVDVLPYHTMGVYKWKEMGIRYPLEGIEAPEEEVVALANKILETSSYK</sequence>
<accession>P0A443</accession>
<accession>Q9X767</accession>
<evidence type="ECO:0000250" key="1"/>
<evidence type="ECO:0000250" key="2">
    <source>
        <dbReference type="UniProtKB" id="P0A9N4"/>
    </source>
</evidence>
<evidence type="ECO:0000255" key="3">
    <source>
        <dbReference type="PROSITE-ProRule" id="PRU01266"/>
    </source>
</evidence>
<evidence type="ECO:0000305" key="4"/>
<gene>
    <name type="primary">pflA</name>
    <name type="synonym">pflC</name>
    <name type="ordered locus">lin1444</name>
</gene>
<proteinExistence type="inferred from homology"/>
<feature type="chain" id="PRO_0000200530" description="Pyruvate formate-lyase-activating enzyme">
    <location>
        <begin position="1"/>
        <end position="248"/>
    </location>
</feature>
<feature type="domain" description="Radical SAM core" evidence="3">
    <location>
        <begin position="17"/>
        <end position="248"/>
    </location>
</feature>
<feature type="binding site" evidence="2">
    <location>
        <position position="31"/>
    </location>
    <ligand>
        <name>[4Fe-4S] cluster</name>
        <dbReference type="ChEBI" id="CHEBI:49883"/>
        <note>4Fe-4S-S-AdoMet</note>
    </ligand>
</feature>
<feature type="binding site" evidence="2">
    <location>
        <position position="35"/>
    </location>
    <ligand>
        <name>[4Fe-4S] cluster</name>
        <dbReference type="ChEBI" id="CHEBI:49883"/>
        <note>4Fe-4S-S-AdoMet</note>
    </ligand>
</feature>
<feature type="binding site" evidence="2">
    <location>
        <begin position="37"/>
        <end position="39"/>
    </location>
    <ligand>
        <name>S-adenosyl-L-methionine</name>
        <dbReference type="ChEBI" id="CHEBI:59789"/>
    </ligand>
</feature>
<feature type="binding site" evidence="2">
    <location>
        <position position="38"/>
    </location>
    <ligand>
        <name>[4Fe-4S] cluster</name>
        <dbReference type="ChEBI" id="CHEBI:49883"/>
        <note>4Fe-4S-S-AdoMet</note>
    </ligand>
</feature>
<feature type="binding site" evidence="2">
    <location>
        <position position="80"/>
    </location>
    <ligand>
        <name>S-adenosyl-L-methionine</name>
        <dbReference type="ChEBI" id="CHEBI:59789"/>
    </ligand>
</feature>
<feature type="binding site" evidence="2">
    <location>
        <begin position="135"/>
        <end position="137"/>
    </location>
    <ligand>
        <name>S-adenosyl-L-methionine</name>
        <dbReference type="ChEBI" id="CHEBI:59789"/>
    </ligand>
</feature>
<feature type="binding site" evidence="2">
    <location>
        <position position="208"/>
    </location>
    <ligand>
        <name>S-adenosyl-L-methionine</name>
        <dbReference type="ChEBI" id="CHEBI:59789"/>
    </ligand>
</feature>